<proteinExistence type="inferred from homology"/>
<organism>
    <name type="scientific">Acinetobacter baumannii (strain AB307-0294)</name>
    <dbReference type="NCBI Taxonomy" id="557600"/>
    <lineage>
        <taxon>Bacteria</taxon>
        <taxon>Pseudomonadati</taxon>
        <taxon>Pseudomonadota</taxon>
        <taxon>Gammaproteobacteria</taxon>
        <taxon>Moraxellales</taxon>
        <taxon>Moraxellaceae</taxon>
        <taxon>Acinetobacter</taxon>
        <taxon>Acinetobacter calcoaceticus/baumannii complex</taxon>
    </lineage>
</organism>
<accession>B7H081</accession>
<sequence length="421" mass="45687">MQDSIEQYMQKVGQQARDASRVLTSASTSLKNHALSAIYTALENNQAAILAANQIDMEKGRSNQLDSALLDRLELTPARFKGMLQGLKDVIALVDPIGEITDLAYRPTGIQIGKMRVPLGVVGMIYESRPNVTLEAASLAIKSGNAIILRGGSEALESNKAIAEAVKHGLKVAGLPEHSVQVIETSDRAAVGHLITMAEYVDVIVPRGGKSLIERVTNEARIPVIKHLDGNCHVFVEAQADLQKALPITLNAKTHRYGVCNAMETLLVDEKIAEVFLPHIAELYAEKQVELRGCPETRRILGSSVKPATEEDWYTEYLGPILAVKVVSGIDEAIDHINKYGSHHTDAIVTENYTLARQFLARVDSSSVVVNASTRFADGFEYGLGAEIGISTDKIHARGPVGLEGLTSQKWIVLGDGQIRQ</sequence>
<gene>
    <name evidence="1" type="primary">proA</name>
    <name type="ordered locus">ABBFA_003045</name>
</gene>
<dbReference type="EC" id="1.2.1.41" evidence="1"/>
<dbReference type="EMBL" id="CP001172">
    <property type="protein sequence ID" value="ACJ57241.1"/>
    <property type="molecule type" value="Genomic_DNA"/>
</dbReference>
<dbReference type="RefSeq" id="WP_001154158.1">
    <property type="nucleotide sequence ID" value="NZ_CP001172.1"/>
</dbReference>
<dbReference type="SMR" id="B7H081"/>
<dbReference type="HOGENOM" id="CLU_030231_0_0_6"/>
<dbReference type="UniPathway" id="UPA00098">
    <property type="reaction ID" value="UER00360"/>
</dbReference>
<dbReference type="Proteomes" id="UP000006924">
    <property type="component" value="Chromosome"/>
</dbReference>
<dbReference type="GO" id="GO:0005737">
    <property type="term" value="C:cytoplasm"/>
    <property type="evidence" value="ECO:0007669"/>
    <property type="project" value="UniProtKB-SubCell"/>
</dbReference>
<dbReference type="GO" id="GO:0004350">
    <property type="term" value="F:glutamate-5-semialdehyde dehydrogenase activity"/>
    <property type="evidence" value="ECO:0007669"/>
    <property type="project" value="UniProtKB-UniRule"/>
</dbReference>
<dbReference type="GO" id="GO:0050661">
    <property type="term" value="F:NADP binding"/>
    <property type="evidence" value="ECO:0007669"/>
    <property type="project" value="InterPro"/>
</dbReference>
<dbReference type="GO" id="GO:0055129">
    <property type="term" value="P:L-proline biosynthetic process"/>
    <property type="evidence" value="ECO:0007669"/>
    <property type="project" value="UniProtKB-UniRule"/>
</dbReference>
<dbReference type="CDD" id="cd07079">
    <property type="entry name" value="ALDH_F18-19_ProA-GPR"/>
    <property type="match status" value="1"/>
</dbReference>
<dbReference type="FunFam" id="3.40.309.10:FF:000006">
    <property type="entry name" value="Gamma-glutamyl phosphate reductase"/>
    <property type="match status" value="1"/>
</dbReference>
<dbReference type="Gene3D" id="3.40.605.10">
    <property type="entry name" value="Aldehyde Dehydrogenase, Chain A, domain 1"/>
    <property type="match status" value="1"/>
</dbReference>
<dbReference type="Gene3D" id="3.40.309.10">
    <property type="entry name" value="Aldehyde Dehydrogenase, Chain A, domain 2"/>
    <property type="match status" value="1"/>
</dbReference>
<dbReference type="HAMAP" id="MF_00412">
    <property type="entry name" value="ProA"/>
    <property type="match status" value="1"/>
</dbReference>
<dbReference type="InterPro" id="IPR016161">
    <property type="entry name" value="Ald_DH/histidinol_DH"/>
</dbReference>
<dbReference type="InterPro" id="IPR016163">
    <property type="entry name" value="Ald_DH_C"/>
</dbReference>
<dbReference type="InterPro" id="IPR016162">
    <property type="entry name" value="Ald_DH_N"/>
</dbReference>
<dbReference type="InterPro" id="IPR015590">
    <property type="entry name" value="Aldehyde_DH_dom"/>
</dbReference>
<dbReference type="InterPro" id="IPR020593">
    <property type="entry name" value="G-glutamylP_reductase_CS"/>
</dbReference>
<dbReference type="InterPro" id="IPR012134">
    <property type="entry name" value="Glu-5-SA_DH"/>
</dbReference>
<dbReference type="InterPro" id="IPR000965">
    <property type="entry name" value="GPR_dom"/>
</dbReference>
<dbReference type="NCBIfam" id="NF001221">
    <property type="entry name" value="PRK00197.1"/>
    <property type="match status" value="1"/>
</dbReference>
<dbReference type="NCBIfam" id="TIGR00407">
    <property type="entry name" value="proA"/>
    <property type="match status" value="1"/>
</dbReference>
<dbReference type="PANTHER" id="PTHR11063:SF8">
    <property type="entry name" value="DELTA-1-PYRROLINE-5-CARBOXYLATE SYNTHASE"/>
    <property type="match status" value="1"/>
</dbReference>
<dbReference type="PANTHER" id="PTHR11063">
    <property type="entry name" value="GLUTAMATE SEMIALDEHYDE DEHYDROGENASE"/>
    <property type="match status" value="1"/>
</dbReference>
<dbReference type="Pfam" id="PF00171">
    <property type="entry name" value="Aldedh"/>
    <property type="match status" value="2"/>
</dbReference>
<dbReference type="PIRSF" id="PIRSF000151">
    <property type="entry name" value="GPR"/>
    <property type="match status" value="1"/>
</dbReference>
<dbReference type="SUPFAM" id="SSF53720">
    <property type="entry name" value="ALDH-like"/>
    <property type="match status" value="1"/>
</dbReference>
<dbReference type="PROSITE" id="PS01223">
    <property type="entry name" value="PROA"/>
    <property type="match status" value="1"/>
</dbReference>
<comment type="function">
    <text evidence="1">Catalyzes the NADPH-dependent reduction of L-glutamate 5-phosphate into L-glutamate 5-semialdehyde and phosphate. The product spontaneously undergoes cyclization to form 1-pyrroline-5-carboxylate.</text>
</comment>
<comment type="catalytic activity">
    <reaction evidence="1">
        <text>L-glutamate 5-semialdehyde + phosphate + NADP(+) = L-glutamyl 5-phosphate + NADPH + H(+)</text>
        <dbReference type="Rhea" id="RHEA:19541"/>
        <dbReference type="ChEBI" id="CHEBI:15378"/>
        <dbReference type="ChEBI" id="CHEBI:43474"/>
        <dbReference type="ChEBI" id="CHEBI:57783"/>
        <dbReference type="ChEBI" id="CHEBI:58066"/>
        <dbReference type="ChEBI" id="CHEBI:58274"/>
        <dbReference type="ChEBI" id="CHEBI:58349"/>
        <dbReference type="EC" id="1.2.1.41"/>
    </reaction>
</comment>
<comment type="pathway">
    <text evidence="1">Amino-acid biosynthesis; L-proline biosynthesis; L-glutamate 5-semialdehyde from L-glutamate: step 2/2.</text>
</comment>
<comment type="subcellular location">
    <subcellularLocation>
        <location evidence="1">Cytoplasm</location>
    </subcellularLocation>
</comment>
<comment type="similarity">
    <text evidence="1">Belongs to the gamma-glutamyl phosphate reductase family.</text>
</comment>
<evidence type="ECO:0000255" key="1">
    <source>
        <dbReference type="HAMAP-Rule" id="MF_00412"/>
    </source>
</evidence>
<feature type="chain" id="PRO_1000123765" description="Gamma-glutamyl phosphate reductase">
    <location>
        <begin position="1"/>
        <end position="421"/>
    </location>
</feature>
<name>PROA_ACIB3</name>
<keyword id="KW-0028">Amino-acid biosynthesis</keyword>
<keyword id="KW-0963">Cytoplasm</keyword>
<keyword id="KW-0521">NADP</keyword>
<keyword id="KW-0560">Oxidoreductase</keyword>
<keyword id="KW-0641">Proline biosynthesis</keyword>
<protein>
    <recommendedName>
        <fullName evidence="1">Gamma-glutamyl phosphate reductase</fullName>
        <shortName evidence="1">GPR</shortName>
        <ecNumber evidence="1">1.2.1.41</ecNumber>
    </recommendedName>
    <alternativeName>
        <fullName evidence="1">Glutamate-5-semialdehyde dehydrogenase</fullName>
    </alternativeName>
    <alternativeName>
        <fullName evidence="1">Glutamyl-gamma-semialdehyde dehydrogenase</fullName>
        <shortName evidence="1">GSA dehydrogenase</shortName>
    </alternativeName>
</protein>
<reference key="1">
    <citation type="journal article" date="2008" name="J. Bacteriol.">
        <title>Comparative genome sequence analysis of multidrug-resistant Acinetobacter baumannii.</title>
        <authorList>
            <person name="Adams M.D."/>
            <person name="Goglin K."/>
            <person name="Molyneaux N."/>
            <person name="Hujer K.M."/>
            <person name="Lavender H."/>
            <person name="Jamison J.J."/>
            <person name="MacDonald I.J."/>
            <person name="Martin K.M."/>
            <person name="Russo T."/>
            <person name="Campagnari A.A."/>
            <person name="Hujer A.M."/>
            <person name="Bonomo R.A."/>
            <person name="Gill S.R."/>
        </authorList>
    </citation>
    <scope>NUCLEOTIDE SEQUENCE [LARGE SCALE GENOMIC DNA]</scope>
    <source>
        <strain>AB307-0294</strain>
    </source>
</reference>